<dbReference type="EMBL" id="U35252">
    <property type="protein sequence ID" value="AAA76721.1"/>
    <property type="molecule type" value="Genomic_DNA"/>
</dbReference>
<dbReference type="EMBL" id="D84432">
    <property type="protein sequence ID" value="BAA12561.1"/>
    <property type="molecule type" value="Genomic_DNA"/>
</dbReference>
<dbReference type="EMBL" id="AL009126">
    <property type="protein sequence ID" value="CAB14373.1"/>
    <property type="molecule type" value="Genomic_DNA"/>
</dbReference>
<dbReference type="EMBL" id="X61962">
    <property type="protein sequence ID" value="CAA43960.1"/>
    <property type="molecule type" value="Genomic_DNA"/>
</dbReference>
<dbReference type="PIR" id="E69711">
    <property type="entry name" value="E69711"/>
</dbReference>
<dbReference type="RefSeq" id="NP_390322.1">
    <property type="nucleotide sequence ID" value="NC_000964.3"/>
</dbReference>
<dbReference type="RefSeq" id="WP_003230227.1">
    <property type="nucleotide sequence ID" value="NZ_OZ025638.1"/>
</dbReference>
<dbReference type="PDB" id="6BS9">
    <property type="method" value="X-ray"/>
    <property type="resolution" value="2.32 A"/>
    <property type="chains" value="A/B/C/D=27-152"/>
</dbReference>
<dbReference type="PDBsum" id="6BS9"/>
<dbReference type="SMR" id="Q01368"/>
<dbReference type="FunCoup" id="Q01368">
    <property type="interactions" value="90"/>
</dbReference>
<dbReference type="STRING" id="224308.BSU24420"/>
<dbReference type="TCDB" id="9.B.70.1.1">
    <property type="family name" value="the multicomponent putative spoiiiae exporter (spoiiia-e) family"/>
</dbReference>
<dbReference type="PaxDb" id="224308-BSU24420"/>
<dbReference type="EnsemblBacteria" id="CAB14373">
    <property type="protein sequence ID" value="CAB14373"/>
    <property type="gene ID" value="BSU_24420"/>
</dbReference>
<dbReference type="GeneID" id="938561"/>
<dbReference type="KEGG" id="bsu:BSU24420"/>
<dbReference type="PATRIC" id="fig|224308.179.peg.2660"/>
<dbReference type="eggNOG" id="ENOG5032S0Q">
    <property type="taxonomic scope" value="Bacteria"/>
</dbReference>
<dbReference type="InParanoid" id="Q01368"/>
<dbReference type="OrthoDB" id="1957909at2"/>
<dbReference type="BioCyc" id="BSUB:BSU24420-MONOMER"/>
<dbReference type="Proteomes" id="UP000001570">
    <property type="component" value="Chromosome"/>
</dbReference>
<dbReference type="GO" id="GO:0030435">
    <property type="term" value="P:sporulation resulting in formation of a cellular spore"/>
    <property type="evidence" value="ECO:0007669"/>
    <property type="project" value="UniProtKB-KW"/>
</dbReference>
<dbReference type="InterPro" id="IPR014198">
    <property type="entry name" value="Spore_III_AB"/>
</dbReference>
<dbReference type="NCBIfam" id="TIGR02833">
    <property type="entry name" value="spore_III_AB"/>
    <property type="match status" value="1"/>
</dbReference>
<dbReference type="Pfam" id="PF09548">
    <property type="entry name" value="Spore_III_AB"/>
    <property type="match status" value="1"/>
</dbReference>
<dbReference type="PIRSF" id="PIRSF021435">
    <property type="entry name" value="SpoIIIAB"/>
    <property type="match status" value="1"/>
</dbReference>
<protein>
    <recommendedName>
        <fullName>Stage III sporulation protein AB</fullName>
    </recommendedName>
</protein>
<accession>Q01368</accession>
<sequence length="171" mass="19153">MLKLLGAVFIVVATTWTGFEMAKIYTERPRQIRQLRAALQSLEAEIMYGHTPLHTASQQIAKQLAQPVSTLFSAFSDQLDKGSDSAKTAWEQSLKKVWDTLSLKKSEYEVLKQFGETLGIHDRISQQKHIKLALTHLEASEADAEQAQAKNEKMIKSLGFLAGLLLILLLM</sequence>
<evidence type="ECO:0007829" key="1">
    <source>
        <dbReference type="PDB" id="6BS9"/>
    </source>
</evidence>
<keyword id="KW-0002">3D-structure</keyword>
<keyword id="KW-1185">Reference proteome</keyword>
<keyword id="KW-0749">Sporulation</keyword>
<proteinExistence type="evidence at protein level"/>
<feature type="chain" id="PRO_0000072066" description="Stage III sporulation protein AB">
    <location>
        <begin position="1"/>
        <end position="171"/>
    </location>
</feature>
<feature type="helix" evidence="1">
    <location>
        <begin position="27"/>
        <end position="48"/>
    </location>
</feature>
<feature type="helix" evidence="1">
    <location>
        <begin position="53"/>
        <end position="63"/>
    </location>
</feature>
<feature type="helix" evidence="1">
    <location>
        <begin position="68"/>
        <end position="80"/>
    </location>
</feature>
<feature type="helix" evidence="1">
    <location>
        <begin position="86"/>
        <end position="97"/>
    </location>
</feature>
<feature type="helix" evidence="1">
    <location>
        <begin position="98"/>
        <end position="100"/>
    </location>
</feature>
<feature type="helix" evidence="1">
    <location>
        <begin position="105"/>
        <end position="117"/>
    </location>
</feature>
<feature type="helix" evidence="1">
    <location>
        <begin position="123"/>
        <end position="150"/>
    </location>
</feature>
<name>SP3AB_BACSU</name>
<reference key="1">
    <citation type="submission" date="1995-09" db="EMBL/GenBank/DDBJ databases">
        <authorList>
            <person name="Guerout-Fleury A.M."/>
            <person name="Gonzy-Treboul G."/>
            <person name="Stragier P."/>
        </authorList>
    </citation>
    <scope>NUCLEOTIDE SEQUENCE [GENOMIC DNA]</scope>
    <source>
        <strain>168 / JH642</strain>
    </source>
</reference>
<reference key="2">
    <citation type="journal article" date="1996" name="Microbiology">
        <title>Systematic sequencing of the 283 kb 210 degrees-232 degrees region of the Bacillus subtilis genome containing the skin element and many sporulation genes.</title>
        <authorList>
            <person name="Mizuno M."/>
            <person name="Masuda S."/>
            <person name="Takemaru K."/>
            <person name="Hosono S."/>
            <person name="Sato T."/>
            <person name="Takeuchi M."/>
            <person name="Kobayashi Y."/>
        </authorList>
    </citation>
    <scope>NUCLEOTIDE SEQUENCE [GENOMIC DNA]</scope>
    <source>
        <strain>168 / JH642</strain>
    </source>
</reference>
<reference key="3">
    <citation type="journal article" date="1997" name="Nature">
        <title>The complete genome sequence of the Gram-positive bacterium Bacillus subtilis.</title>
        <authorList>
            <person name="Kunst F."/>
            <person name="Ogasawara N."/>
            <person name="Moszer I."/>
            <person name="Albertini A.M."/>
            <person name="Alloni G."/>
            <person name="Azevedo V."/>
            <person name="Bertero M.G."/>
            <person name="Bessieres P."/>
            <person name="Bolotin A."/>
            <person name="Borchert S."/>
            <person name="Borriss R."/>
            <person name="Boursier L."/>
            <person name="Brans A."/>
            <person name="Braun M."/>
            <person name="Brignell S.C."/>
            <person name="Bron S."/>
            <person name="Brouillet S."/>
            <person name="Bruschi C.V."/>
            <person name="Caldwell B."/>
            <person name="Capuano V."/>
            <person name="Carter N.M."/>
            <person name="Choi S.-K."/>
            <person name="Codani J.-J."/>
            <person name="Connerton I.F."/>
            <person name="Cummings N.J."/>
            <person name="Daniel R.A."/>
            <person name="Denizot F."/>
            <person name="Devine K.M."/>
            <person name="Duesterhoeft A."/>
            <person name="Ehrlich S.D."/>
            <person name="Emmerson P.T."/>
            <person name="Entian K.-D."/>
            <person name="Errington J."/>
            <person name="Fabret C."/>
            <person name="Ferrari E."/>
            <person name="Foulger D."/>
            <person name="Fritz C."/>
            <person name="Fujita M."/>
            <person name="Fujita Y."/>
            <person name="Fuma S."/>
            <person name="Galizzi A."/>
            <person name="Galleron N."/>
            <person name="Ghim S.-Y."/>
            <person name="Glaser P."/>
            <person name="Goffeau A."/>
            <person name="Golightly E.J."/>
            <person name="Grandi G."/>
            <person name="Guiseppi G."/>
            <person name="Guy B.J."/>
            <person name="Haga K."/>
            <person name="Haiech J."/>
            <person name="Harwood C.R."/>
            <person name="Henaut A."/>
            <person name="Hilbert H."/>
            <person name="Holsappel S."/>
            <person name="Hosono S."/>
            <person name="Hullo M.-F."/>
            <person name="Itaya M."/>
            <person name="Jones L.-M."/>
            <person name="Joris B."/>
            <person name="Karamata D."/>
            <person name="Kasahara Y."/>
            <person name="Klaerr-Blanchard M."/>
            <person name="Klein C."/>
            <person name="Kobayashi Y."/>
            <person name="Koetter P."/>
            <person name="Koningstein G."/>
            <person name="Krogh S."/>
            <person name="Kumano M."/>
            <person name="Kurita K."/>
            <person name="Lapidus A."/>
            <person name="Lardinois S."/>
            <person name="Lauber J."/>
            <person name="Lazarevic V."/>
            <person name="Lee S.-M."/>
            <person name="Levine A."/>
            <person name="Liu H."/>
            <person name="Masuda S."/>
            <person name="Mauel C."/>
            <person name="Medigue C."/>
            <person name="Medina N."/>
            <person name="Mellado R.P."/>
            <person name="Mizuno M."/>
            <person name="Moestl D."/>
            <person name="Nakai S."/>
            <person name="Noback M."/>
            <person name="Noone D."/>
            <person name="O'Reilly M."/>
            <person name="Ogawa K."/>
            <person name="Ogiwara A."/>
            <person name="Oudega B."/>
            <person name="Park S.-H."/>
            <person name="Parro V."/>
            <person name="Pohl T.M."/>
            <person name="Portetelle D."/>
            <person name="Porwollik S."/>
            <person name="Prescott A.M."/>
            <person name="Presecan E."/>
            <person name="Pujic P."/>
            <person name="Purnelle B."/>
            <person name="Rapoport G."/>
            <person name="Rey M."/>
            <person name="Reynolds S."/>
            <person name="Rieger M."/>
            <person name="Rivolta C."/>
            <person name="Rocha E."/>
            <person name="Roche B."/>
            <person name="Rose M."/>
            <person name="Sadaie Y."/>
            <person name="Sato T."/>
            <person name="Scanlan E."/>
            <person name="Schleich S."/>
            <person name="Schroeter R."/>
            <person name="Scoffone F."/>
            <person name="Sekiguchi J."/>
            <person name="Sekowska A."/>
            <person name="Seror S.J."/>
            <person name="Serror P."/>
            <person name="Shin B.-S."/>
            <person name="Soldo B."/>
            <person name="Sorokin A."/>
            <person name="Tacconi E."/>
            <person name="Takagi T."/>
            <person name="Takahashi H."/>
            <person name="Takemaru K."/>
            <person name="Takeuchi M."/>
            <person name="Tamakoshi A."/>
            <person name="Tanaka T."/>
            <person name="Terpstra P."/>
            <person name="Tognoni A."/>
            <person name="Tosato V."/>
            <person name="Uchiyama S."/>
            <person name="Vandenbol M."/>
            <person name="Vannier F."/>
            <person name="Vassarotti A."/>
            <person name="Viari A."/>
            <person name="Wambutt R."/>
            <person name="Wedler E."/>
            <person name="Wedler H."/>
            <person name="Weitzenegger T."/>
            <person name="Winters P."/>
            <person name="Wipat A."/>
            <person name="Yamamoto H."/>
            <person name="Yamane K."/>
            <person name="Yasumoto K."/>
            <person name="Yata K."/>
            <person name="Yoshida K."/>
            <person name="Yoshikawa H.-F."/>
            <person name="Zumstein E."/>
            <person name="Yoshikawa H."/>
            <person name="Danchin A."/>
        </authorList>
    </citation>
    <scope>NUCLEOTIDE SEQUENCE [LARGE SCALE GENOMIC DNA]</scope>
    <source>
        <strain>168</strain>
    </source>
</reference>
<reference key="4">
    <citation type="journal article" date="1991" name="Mol. Microbiol.">
        <title>The spoIIIA operon of Bacillus subtilis defines a new temporal class of mother-cell-specific sporulation genes under the control of the sigma E form of RNA polymerase.</title>
        <authorList>
            <person name="Illing N."/>
            <person name="Errington J."/>
        </authorList>
    </citation>
    <scope>NUCLEOTIDE SEQUENCE [GENOMIC DNA] OF 1-42</scope>
    <source>
        <strain>168</strain>
    </source>
</reference>
<organism>
    <name type="scientific">Bacillus subtilis (strain 168)</name>
    <dbReference type="NCBI Taxonomy" id="224308"/>
    <lineage>
        <taxon>Bacteria</taxon>
        <taxon>Bacillati</taxon>
        <taxon>Bacillota</taxon>
        <taxon>Bacilli</taxon>
        <taxon>Bacillales</taxon>
        <taxon>Bacillaceae</taxon>
        <taxon>Bacillus</taxon>
    </lineage>
</organism>
<gene>
    <name type="primary">spoIIIAB</name>
    <name type="ordered locus">BSU24420</name>
</gene>